<dbReference type="EMBL" id="U37089">
    <property type="protein sequence ID" value="AAC45316.1"/>
    <property type="molecule type" value="Genomic_DNA"/>
</dbReference>
<dbReference type="EMBL" id="U37455">
    <property type="protein sequence ID" value="AAC45319.1"/>
    <property type="molecule type" value="Genomic_DNA"/>
</dbReference>
<dbReference type="EMBL" id="D64044">
    <property type="protein sequence ID" value="BAA10918.1"/>
    <property type="molecule type" value="Genomic_DNA"/>
</dbReference>
<dbReference type="EMBL" id="U00096">
    <property type="protein sequence ID" value="AAC75624.1"/>
    <property type="molecule type" value="Genomic_DNA"/>
</dbReference>
<dbReference type="EMBL" id="AP009048">
    <property type="protein sequence ID" value="BAE76747.1"/>
    <property type="molecule type" value="Genomic_DNA"/>
</dbReference>
<dbReference type="PIR" id="I83298">
    <property type="entry name" value="I83298"/>
</dbReference>
<dbReference type="RefSeq" id="NP_417066.1">
    <property type="nucleotide sequence ID" value="NC_000913.3"/>
</dbReference>
<dbReference type="RefSeq" id="WP_000812053.1">
    <property type="nucleotide sequence ID" value="NZ_SSZK01000005.1"/>
</dbReference>
<dbReference type="PDB" id="2P4B">
    <property type="method" value="X-ray"/>
    <property type="resolution" value="2.40 A"/>
    <property type="chains" value="A/B/C=24-318"/>
</dbReference>
<dbReference type="PDB" id="2V42">
    <property type="method" value="X-ray"/>
    <property type="resolution" value="2.75 A"/>
    <property type="chains" value="A/B=23-318"/>
</dbReference>
<dbReference type="PDB" id="2V43">
    <property type="method" value="X-ray"/>
    <property type="resolution" value="2.37 A"/>
    <property type="chains" value="A/B/C=23-318"/>
</dbReference>
<dbReference type="PDB" id="3M4W">
    <property type="method" value="X-ray"/>
    <property type="resolution" value="2.30 A"/>
    <property type="chains" value="A/B/C/D=24-318"/>
</dbReference>
<dbReference type="PDBsum" id="2P4B"/>
<dbReference type="PDBsum" id="2V42"/>
<dbReference type="PDBsum" id="2V43"/>
<dbReference type="PDBsum" id="3M4W"/>
<dbReference type="SMR" id="P0AFX9"/>
<dbReference type="BioGRID" id="4260602">
    <property type="interactions" value="26"/>
</dbReference>
<dbReference type="ComplexPortal" id="CPX-2532">
    <property type="entry name" value="rpoe-rsea-rseb sigma-antisigma complex"/>
</dbReference>
<dbReference type="DIP" id="DIP-10802N"/>
<dbReference type="FunCoup" id="P0AFX9">
    <property type="interactions" value="55"/>
</dbReference>
<dbReference type="IntAct" id="P0AFX9">
    <property type="interactions" value="2"/>
</dbReference>
<dbReference type="STRING" id="511145.b2571"/>
<dbReference type="jPOST" id="P0AFX9"/>
<dbReference type="PaxDb" id="511145-b2571"/>
<dbReference type="EnsemblBacteria" id="AAC75624">
    <property type="protein sequence ID" value="AAC75624"/>
    <property type="gene ID" value="b2571"/>
</dbReference>
<dbReference type="GeneID" id="75206265"/>
<dbReference type="GeneID" id="947054"/>
<dbReference type="KEGG" id="ecj:JW2555"/>
<dbReference type="KEGG" id="eco:b2571"/>
<dbReference type="KEGG" id="ecoc:C3026_14240"/>
<dbReference type="PATRIC" id="fig|1411691.4.peg.4163"/>
<dbReference type="EchoBASE" id="EB2969"/>
<dbReference type="eggNOG" id="COG3026">
    <property type="taxonomic scope" value="Bacteria"/>
</dbReference>
<dbReference type="HOGENOM" id="CLU_054710_1_0_6"/>
<dbReference type="InParanoid" id="P0AFX9"/>
<dbReference type="OMA" id="KDDFRYQ"/>
<dbReference type="OrthoDB" id="7067274at2"/>
<dbReference type="PhylomeDB" id="P0AFX9"/>
<dbReference type="BioCyc" id="EcoCyc:G7348-MONOMER"/>
<dbReference type="EvolutionaryTrace" id="P0AFX9"/>
<dbReference type="PRO" id="PR:P0AFX9"/>
<dbReference type="Proteomes" id="UP000000625">
    <property type="component" value="Chromosome"/>
</dbReference>
<dbReference type="GO" id="GO:0030288">
    <property type="term" value="C:outer membrane-bounded periplasmic space"/>
    <property type="evidence" value="ECO:0000314"/>
    <property type="project" value="EcoCyc"/>
</dbReference>
<dbReference type="GO" id="GO:0005886">
    <property type="term" value="C:plasma membrane"/>
    <property type="evidence" value="ECO:0000314"/>
    <property type="project" value="ComplexPortal"/>
</dbReference>
<dbReference type="GO" id="GO:1903865">
    <property type="term" value="C:sigma factor antagonist complex"/>
    <property type="evidence" value="ECO:0000353"/>
    <property type="project" value="ComplexPortal"/>
</dbReference>
<dbReference type="GO" id="GO:0045152">
    <property type="term" value="F:antisigma factor binding"/>
    <property type="evidence" value="ECO:0000314"/>
    <property type="project" value="EcoCyc"/>
</dbReference>
<dbReference type="GO" id="GO:0042802">
    <property type="term" value="F:identical protein binding"/>
    <property type="evidence" value="ECO:0000353"/>
    <property type="project" value="IntAct"/>
</dbReference>
<dbReference type="GO" id="GO:0008289">
    <property type="term" value="F:lipid binding"/>
    <property type="evidence" value="ECO:0007669"/>
    <property type="project" value="UniProtKB-KW"/>
</dbReference>
<dbReference type="GO" id="GO:0045892">
    <property type="term" value="P:negative regulation of DNA-templated transcription"/>
    <property type="evidence" value="ECO:0000303"/>
    <property type="project" value="ComplexPortal"/>
</dbReference>
<dbReference type="GO" id="GO:0050821">
    <property type="term" value="P:protein stabilization"/>
    <property type="evidence" value="ECO:0000314"/>
    <property type="project" value="EcoCyc"/>
</dbReference>
<dbReference type="GO" id="GO:0032885">
    <property type="term" value="P:regulation of polysaccharide biosynthetic process"/>
    <property type="evidence" value="ECO:0000318"/>
    <property type="project" value="GO_Central"/>
</dbReference>
<dbReference type="CDD" id="cd16327">
    <property type="entry name" value="RseB"/>
    <property type="match status" value="1"/>
</dbReference>
<dbReference type="FunFam" id="2.50.20.10:FF:000003">
    <property type="entry name" value="Sigma-E factor regulatory protein RseB"/>
    <property type="match status" value="1"/>
</dbReference>
<dbReference type="FunFam" id="3.30.200.100:FF:000001">
    <property type="entry name" value="Sigma-E factor regulatory protein RseB"/>
    <property type="match status" value="1"/>
</dbReference>
<dbReference type="Gene3D" id="2.50.20.10">
    <property type="entry name" value="Lipoprotein localisation LolA/LolB/LppX"/>
    <property type="match status" value="1"/>
</dbReference>
<dbReference type="Gene3D" id="3.30.200.100">
    <property type="entry name" value="MucB/RseB, C-terminal domain"/>
    <property type="match status" value="1"/>
</dbReference>
<dbReference type="InterPro" id="IPR033436">
    <property type="entry name" value="MucB/RseB_C"/>
</dbReference>
<dbReference type="InterPro" id="IPR038484">
    <property type="entry name" value="MucB/RseB_C_sf"/>
</dbReference>
<dbReference type="InterPro" id="IPR033434">
    <property type="entry name" value="MucB/RseB_N"/>
</dbReference>
<dbReference type="InterPro" id="IPR005588">
    <property type="entry name" value="MucB_RseB"/>
</dbReference>
<dbReference type="NCBIfam" id="NF006990">
    <property type="entry name" value="PRK09455.1"/>
    <property type="match status" value="1"/>
</dbReference>
<dbReference type="PANTHER" id="PTHR38782">
    <property type="match status" value="1"/>
</dbReference>
<dbReference type="PANTHER" id="PTHR38782:SF1">
    <property type="entry name" value="SIGMA-E FACTOR REGULATORY PROTEIN RSEB"/>
    <property type="match status" value="1"/>
</dbReference>
<dbReference type="Pfam" id="PF03888">
    <property type="entry name" value="MucB_RseB"/>
    <property type="match status" value="1"/>
</dbReference>
<dbReference type="Pfam" id="PF17188">
    <property type="entry name" value="MucB_RseB_C"/>
    <property type="match status" value="1"/>
</dbReference>
<dbReference type="PIRSF" id="PIRSF005427">
    <property type="entry name" value="RseB"/>
    <property type="match status" value="1"/>
</dbReference>
<keyword id="KW-0002">3D-structure</keyword>
<keyword id="KW-0446">Lipid-binding</keyword>
<keyword id="KW-0574">Periplasm</keyword>
<keyword id="KW-1185">Reference proteome</keyword>
<keyword id="KW-0732">Signal</keyword>
<keyword id="KW-0804">Transcription</keyword>
<keyword id="KW-0805">Transcription regulation</keyword>
<gene>
    <name type="primary">rseB</name>
    <name type="ordered locus">b2571</name>
    <name type="ordered locus">JW2555</name>
</gene>
<protein>
    <recommendedName>
        <fullName>Sigma-E factor regulatory protein RseB</fullName>
    </recommendedName>
</protein>
<evidence type="ECO:0000255" key="1"/>
<evidence type="ECO:0000269" key="2">
    <source>
    </source>
</evidence>
<evidence type="ECO:0000269" key="3">
    <source>
    </source>
</evidence>
<evidence type="ECO:0000269" key="4">
    <source>
    </source>
</evidence>
<evidence type="ECO:0000269" key="5">
    <source>
    </source>
</evidence>
<evidence type="ECO:0000269" key="6">
    <source>
    </source>
</evidence>
<evidence type="ECO:0000269" key="7">
    <source>
    </source>
</evidence>
<evidence type="ECO:0000269" key="8">
    <source>
    </source>
</evidence>
<evidence type="ECO:0000269" key="9">
    <source>
    </source>
</evidence>
<evidence type="ECO:0000269" key="10">
    <source>
    </source>
</evidence>
<evidence type="ECO:0000269" key="11">
    <source>
    </source>
</evidence>
<evidence type="ECO:0000269" key="12">
    <source>
    </source>
</evidence>
<evidence type="ECO:0000269" key="13">
    <source>
    </source>
</evidence>
<evidence type="ECO:0000305" key="14"/>
<evidence type="ECO:0007829" key="15">
    <source>
        <dbReference type="PDB" id="2P4B"/>
    </source>
</evidence>
<evidence type="ECO:0007829" key="16">
    <source>
        <dbReference type="PDB" id="2V42"/>
    </source>
</evidence>
<evidence type="ECO:0007829" key="17">
    <source>
        <dbReference type="PDB" id="2V43"/>
    </source>
</evidence>
<evidence type="ECO:0007829" key="18">
    <source>
        <dbReference type="PDB" id="3M4W"/>
    </source>
</evidence>
<name>RSEB_ECOLI</name>
<comment type="function">
    <text evidence="2 4 9 10 12 13">Negatively modulates the activity of sigma-E (RpoE) by stabilizing RseA under non-stress conditions. Although not essential for association of sigma-E with Rsea it increases their affinity 2- to 3-fold. When bound to RseA it prevents proteolysis by DegS, which is probably relieved by lipopolysaccharide binding (LPS).</text>
</comment>
<comment type="activity regulation">
    <text evidence="10">Binding to RseA is inhibited by LPS fragments; phosphorylated N-acetylglucosamine (GlcNAc) with N-linked acyl chains are minimally necessary to disrupt binding to RseA. Once RseB is no longer bound to RseA the latter is susceptible to DegS degradation. Thus if periplasmic LPS levels increase the sigma-E regulon is induced.</text>
</comment>
<comment type="subunit">
    <text evidence="3 4 5 6 7 8 12 13">Homodimer. Interacts with RseA with 1:1 stoichiometry. Binding to LPS stabilizes a homotetramer that does not bind RseA.</text>
</comment>
<comment type="interaction">
    <interactant intactId="EBI-1135231">
        <id>P0AFX9</id>
    </interactant>
    <interactant intactId="EBI-1117560">
        <id>P0AFX7</id>
        <label>rseA</label>
    </interactant>
    <organismsDiffer>false</organismsDiffer>
    <experiments>9</experiments>
</comment>
<comment type="interaction">
    <interactant intactId="EBI-1135231">
        <id>P0AFX9</id>
    </interactant>
    <interactant intactId="EBI-1135231">
        <id>P0AFX9</id>
        <label>rseB</label>
    </interactant>
    <organismsDiffer>false</organismsDiffer>
    <experiments>3</experiments>
</comment>
<comment type="subcellular location">
    <subcellularLocation>
        <location evidence="3 12 13">Periplasm</location>
    </subcellularLocation>
    <text>Partially associates with the inner membrane via RseA.</text>
</comment>
<comment type="domain">
    <text evidence="6">The N-terminal domain (residues 24-203) is responsible for oligomerization, while the C-terminal domain (residues 222-318) interacts with RseA.</text>
</comment>
<comment type="disruption phenotype">
    <text evidence="2 12 13">About 2-fold increased sigma-E activity, 2-fold decrease in stability of RseA.</text>
</comment>
<comment type="miscellaneous">
    <text evidence="11 12 13">Part of the rseD-rpoE-rseA-rseB-rseC operon (PubMed:28924029, PubMed:9159522, PubMed:9159523).</text>
</comment>
<comment type="similarity">
    <text evidence="14">Belongs to the RseB family.</text>
</comment>
<reference key="1">
    <citation type="journal article" date="1995" name="EMBO J.">
        <title>The rpoE gene encoding the sigma E (sigma 24) heat shock sigma factor of Escherichia coli.</title>
        <authorList>
            <person name="Raina S."/>
            <person name="Missiakas D."/>
            <person name="Georgopoulos C."/>
        </authorList>
    </citation>
    <scope>NUCLEOTIDE SEQUENCE [GENOMIC DNA]</scope>
    <source>
        <strain>K12 / W3110 / ATCC 27325 / DSM 5911</strain>
    </source>
</reference>
<reference key="2">
    <citation type="journal article" date="1997" name="Mol. Microbiol.">
        <title>The sigmaE-mediated response to extracytoplasmic stress in Escherichia coli is transduced by RseA and RseB, two negative regulators of sigmaE.</title>
        <authorList>
            <person name="De Las Penas A."/>
            <person name="Connolly L."/>
            <person name="Gross C.A."/>
        </authorList>
    </citation>
    <scope>NUCLEOTIDE SEQUENCE [GENOMIC DNA]</scope>
    <scope>FUNCTION</scope>
    <scope>INTERACTION WITH RSEA</scope>
    <scope>SUBUNIT</scope>
    <scope>SUBCELLULAR LOCATION</scope>
    <scope>OPERON</scope>
    <scope>DISRUPTION PHENOTYPE</scope>
    <source>
        <strain>K12 / MC1061 / ATCC 53338 / DSM 7140</strain>
    </source>
</reference>
<reference key="3">
    <citation type="submission" date="1995-09" db="EMBL/GenBank/DDBJ databases">
        <authorList>
            <person name="Nashimoto H."/>
            <person name="Saito N."/>
        </authorList>
    </citation>
    <scope>NUCLEOTIDE SEQUENCE [GENOMIC DNA]</scope>
    <source>
        <strain>K12 / W3110 / ATCC 27325 / DSM 5911</strain>
    </source>
</reference>
<reference key="4">
    <citation type="journal article" date="1997" name="Science">
        <title>The complete genome sequence of Escherichia coli K-12.</title>
        <authorList>
            <person name="Blattner F.R."/>
            <person name="Plunkett G. III"/>
            <person name="Bloch C.A."/>
            <person name="Perna N.T."/>
            <person name="Burland V."/>
            <person name="Riley M."/>
            <person name="Collado-Vides J."/>
            <person name="Glasner J.D."/>
            <person name="Rode C.K."/>
            <person name="Mayhew G.F."/>
            <person name="Gregor J."/>
            <person name="Davis N.W."/>
            <person name="Kirkpatrick H.A."/>
            <person name="Goeden M.A."/>
            <person name="Rose D.J."/>
            <person name="Mau B."/>
            <person name="Shao Y."/>
        </authorList>
    </citation>
    <scope>NUCLEOTIDE SEQUENCE [LARGE SCALE GENOMIC DNA]</scope>
    <source>
        <strain>K12 / MG1655 / ATCC 47076</strain>
    </source>
</reference>
<reference key="5">
    <citation type="journal article" date="2006" name="Mol. Syst. Biol.">
        <title>Highly accurate genome sequences of Escherichia coli K-12 strains MG1655 and W3110.</title>
        <authorList>
            <person name="Hayashi K."/>
            <person name="Morooka N."/>
            <person name="Yamamoto Y."/>
            <person name="Fujita K."/>
            <person name="Isono K."/>
            <person name="Choi S."/>
            <person name="Ohtsubo E."/>
            <person name="Baba T."/>
            <person name="Wanner B.L."/>
            <person name="Mori H."/>
            <person name="Horiuchi T."/>
        </authorList>
    </citation>
    <scope>NUCLEOTIDE SEQUENCE [LARGE SCALE GENOMIC DNA]</scope>
    <source>
        <strain>K12 / W3110 / ATCC 27325 / DSM 5911</strain>
    </source>
</reference>
<reference key="6">
    <citation type="journal article" date="1997" name="Mol. Microbiol.">
        <title>Modulation of the Escherichia coli sigmaE (RpoE) heat-shock transcription-factor activity by the RseA, RseB and RseC proteins.</title>
        <authorList>
            <person name="Missiakas D."/>
            <person name="Mayer M.P."/>
            <person name="Lemaire M."/>
            <person name="Georgopoulos C."/>
            <person name="Raina S."/>
        </authorList>
    </citation>
    <scope>FUNCTION</scope>
    <scope>INTERACTION WITH RSEA</scope>
    <scope>SUBUNIT</scope>
    <scope>SUBCELLULAR LOCATION</scope>
    <scope>DISRUPTION PHENOTYPE</scope>
    <scope>OPERON</scope>
    <source>
        <strain>K12 / MC4100 / ATCC 35695 / DSM 6574</strain>
    </source>
</reference>
<reference key="7">
    <citation type="journal article" date="1999" name="Genes Dev.">
        <title>The Escherichia coli sigma(E)-dependent extracytoplasmic stress response is controlled by the regulated proteolysis of an anti-sigma factor.</title>
        <authorList>
            <person name="Ades S.E."/>
            <person name="Connolly L.E."/>
            <person name="Alba B.M."/>
            <person name="Gross C.A."/>
        </authorList>
    </citation>
    <scope>FUNCTION</scope>
    <scope>DISRUPTION PHENOTYPE</scope>
    <source>
        <strain>K12 / MC1061 / ATCC 53338 / DSM 7140</strain>
    </source>
</reference>
<reference key="8">
    <citation type="journal article" date="2000" name="J. Biol. Chem.">
        <title>RseB binding to the periplasmic domain of RseA modulates the RseA:sigmaE interaction in the cytoplasm and the availability of sigmaE.RNA polymerase.</title>
        <authorList>
            <person name="Collinet B."/>
            <person name="Yuzawa H."/>
            <person name="Chen T."/>
            <person name="Herrera C."/>
            <person name="Missiakas D."/>
        </authorList>
    </citation>
    <scope>INTERACTION WITH RSEA</scope>
    <scope>SUBCELLULAR LOCATION</scope>
    <source>
        <strain>K12 / MC4100 / ATCC 35695 / DSM 6574</strain>
    </source>
</reference>
<reference key="9">
    <citation type="journal article" date="2007" name="Proc. Natl. Acad. Sci. U.S.A.">
        <title>Inhibition of regulated proteolysis by RseB.</title>
        <authorList>
            <person name="Cezairliyan B.O."/>
            <person name="Sauer R.T."/>
        </authorList>
    </citation>
    <scope>FUNCTION</scope>
    <scope>INTERACTION WITH RSEA</scope>
    <scope>SUBUNIT</scope>
</reference>
<reference key="10">
    <citation type="journal article" date="2008" name="J. Synchrotron Radiat.">
        <title>Solution structures of RseA and its complex with RseB.</title>
        <authorList>
            <person name="Jin K.S."/>
            <person name="Kim D.Y."/>
            <person name="Rho Y."/>
            <person name="Le V.B."/>
            <person name="Kwon E."/>
            <person name="Kim K.K."/>
            <person name="Ree M."/>
        </authorList>
    </citation>
    <scope>INTERACTION WITH RSEA</scope>
    <scope>SUBUNIT</scope>
</reference>
<reference key="11">
    <citation type="journal article" date="2011" name="Proc. Natl. Acad. Sci. U.S.A.">
        <title>Signal integration by DegS and RseB governs the sigma-E-mediated envelope stress response in Escherichia coli.</title>
        <authorList>
            <person name="Chaba R."/>
            <person name="Alba B.M."/>
            <person name="Guo M.S."/>
            <person name="Sohn J."/>
            <person name="Ahuja N."/>
            <person name="Sauer R.T."/>
            <person name="Gross C.A."/>
        </authorList>
    </citation>
    <scope>FUNCTION</scope>
    <source>
        <strain>K12 / MC1061 / ATCC 53338 / DSM 7140</strain>
    </source>
</reference>
<reference key="12">
    <citation type="journal article" date="2013" name="Science">
        <title>Dual molecular signals mediate the bacterial response to outer-membrane stress.</title>
        <authorList>
            <person name="Lima S."/>
            <person name="Guo M.S."/>
            <person name="Chaba R."/>
            <person name="Gross C.A."/>
            <person name="Sauer R.T."/>
        </authorList>
    </citation>
    <scope>FUNCTION</scope>
    <scope>BINDING TO RSEA</scope>
    <scope>BINDING TO LIPID-A</scope>
    <scope>ACTIVITY REGULATION</scope>
    <source>
        <strain>K12</strain>
    </source>
</reference>
<reference key="13">
    <citation type="journal article" date="2017" name="J. Bacteriol.">
        <title>Circuitry linking the global Csr and sigma(E)-dependent cell envelope stress response systems.</title>
        <authorList>
            <person name="Yakhnin H."/>
            <person name="Aichele R."/>
            <person name="Ades S.E."/>
            <person name="Romeo T."/>
            <person name="Babitzke P."/>
        </authorList>
    </citation>
    <scope>OPERON</scope>
    <source>
        <strain>K12 / CF7789</strain>
    </source>
</reference>
<reference key="14">
    <citation type="journal article" date="2007" name="J. Mol. Biol.">
        <title>The structure of RseB: a sensor in periplasmic stress response of E. coli.</title>
        <authorList>
            <person name="Wollmann P."/>
            <person name="Zeth K."/>
        </authorList>
    </citation>
    <scope>X-RAY CRYSTALLOGRAPHY (2.37 ANGSTROMS) OF 23-318</scope>
    <scope>INTERACTION WITH RSEA</scope>
    <scope>SUBUNIT</scope>
    <scope>DOMAIN</scope>
</reference>
<reference key="15">
    <citation type="journal article" date="2007" name="Proc. Natl. Acad. Sci. U.S.A.">
        <title>Crystal structure of RseB and a model of its binding mode to RseA.</title>
        <authorList>
            <person name="Kim D.Y."/>
            <person name="Jin K.S."/>
            <person name="Kwon E."/>
            <person name="Ree M."/>
            <person name="Kim K.K."/>
        </authorList>
    </citation>
    <scope>X-RAY CRYSTALLOGRAPHY (2.4 ANGSTROMS) OF 24-318</scope>
    <scope>SUBUNIT</scope>
    <scope>BINDING TO RSEA</scope>
</reference>
<reference key="16">
    <citation type="journal article" date="2010" name="Protein Sci.">
        <title>Structural basis for the negative regulation of bacterial stress response by RseB.</title>
        <authorList>
            <person name="Kim D.Y."/>
            <person name="Kwon E."/>
            <person name="Choi J."/>
            <person name="Hwang H.Y."/>
            <person name="Kim K.K."/>
        </authorList>
    </citation>
    <scope>X-RAY CRYSTALLOGRAPHY (2.3 ANGSTROMS) OF 24-318 IN COMPLEX WITH RSEA</scope>
</reference>
<feature type="signal peptide" evidence="1">
    <location>
        <begin position="1"/>
        <end position="23"/>
    </location>
</feature>
<feature type="chain" id="PRO_0000022249" description="Sigma-E factor regulatory protein RseB">
    <location>
        <begin position="24"/>
        <end position="318"/>
    </location>
</feature>
<feature type="region of interest" description="Responsible for oligomerization">
    <location>
        <begin position="24"/>
        <end position="203"/>
    </location>
</feature>
<feature type="region of interest" description="Interaction with RseA">
    <location>
        <begin position="222"/>
        <end position="318"/>
    </location>
</feature>
<feature type="helix" evidence="18">
    <location>
        <begin position="26"/>
        <end position="40"/>
    </location>
</feature>
<feature type="strand" evidence="18">
    <location>
        <begin position="41"/>
        <end position="51"/>
    </location>
</feature>
<feature type="strand" evidence="18">
    <location>
        <begin position="54"/>
        <end position="64"/>
    </location>
</feature>
<feature type="strand" evidence="18">
    <location>
        <begin position="66"/>
        <end position="75"/>
    </location>
</feature>
<feature type="strand" evidence="18">
    <location>
        <begin position="77"/>
        <end position="79"/>
    </location>
</feature>
<feature type="strand" evidence="18">
    <location>
        <begin position="82"/>
        <end position="86"/>
    </location>
</feature>
<feature type="strand" evidence="18">
    <location>
        <begin position="89"/>
        <end position="93"/>
    </location>
</feature>
<feature type="strand" evidence="18">
    <location>
        <begin position="100"/>
        <end position="103"/>
    </location>
</feature>
<feature type="strand" evidence="16">
    <location>
        <begin position="108"/>
        <end position="111"/>
    </location>
</feature>
<feature type="helix" evidence="18">
    <location>
        <begin position="113"/>
        <end position="116"/>
    </location>
</feature>
<feature type="helix" evidence="18">
    <location>
        <begin position="119"/>
        <end position="122"/>
    </location>
</feature>
<feature type="turn" evidence="18">
    <location>
        <begin position="123"/>
        <end position="125"/>
    </location>
</feature>
<feature type="strand" evidence="18">
    <location>
        <begin position="126"/>
        <end position="136"/>
    </location>
</feature>
<feature type="strand" evidence="18">
    <location>
        <begin position="139"/>
        <end position="148"/>
    </location>
</feature>
<feature type="strand" evidence="18">
    <location>
        <begin position="155"/>
        <end position="161"/>
    </location>
</feature>
<feature type="turn" evidence="18">
    <location>
        <begin position="162"/>
        <end position="164"/>
    </location>
</feature>
<feature type="strand" evidence="18">
    <location>
        <begin position="167"/>
        <end position="173"/>
    </location>
</feature>
<feature type="strand" evidence="18">
    <location>
        <begin position="179"/>
        <end position="193"/>
    </location>
</feature>
<feature type="helix" evidence="18">
    <location>
        <begin position="196"/>
        <end position="203"/>
    </location>
</feature>
<feature type="strand" evidence="18">
    <location>
        <begin position="223"/>
        <end position="225"/>
    </location>
</feature>
<feature type="strand" evidence="18">
    <location>
        <begin position="232"/>
        <end position="237"/>
    </location>
</feature>
<feature type="strand" evidence="17">
    <location>
        <begin position="242"/>
        <end position="245"/>
    </location>
</feature>
<feature type="strand" evidence="18">
    <location>
        <begin position="250"/>
        <end position="255"/>
    </location>
</feature>
<feature type="strand" evidence="18">
    <location>
        <begin position="260"/>
        <end position="267"/>
    </location>
</feature>
<feature type="strand" evidence="18">
    <location>
        <begin position="275"/>
        <end position="279"/>
    </location>
</feature>
<feature type="strand" evidence="18">
    <location>
        <begin position="282"/>
        <end position="289"/>
    </location>
</feature>
<feature type="strand" evidence="18">
    <location>
        <begin position="292"/>
        <end position="300"/>
    </location>
</feature>
<feature type="helix" evidence="18">
    <location>
        <begin position="302"/>
        <end position="309"/>
    </location>
</feature>
<feature type="strand" evidence="15">
    <location>
        <begin position="312"/>
        <end position="314"/>
    </location>
</feature>
<sequence>MKQLWFAMSLVTGSLLFSANASATPASGALLQQMNLASQSLNYELSFISINKQGVESLRYRHARLDNRPLAQLLQMDGPRREVVQRGNEISYFEPGLEPFTLNGDYIVDSLPSLIYTDFKRLSPYYDFISVGRTRIADRLCEVIRVVARDGTRYSYIVWMDTESKLPMRVDLLDRDGETLEQFRVIAFNVNQDISSSMQTLAKANLPPLLSVPVGEKAKFSWTPTWLPQGFSEVSSSRRPLPTMDNMPIESRLYSDGLFSFSVNVNRATPSSTDQMLRTGRRTVSTSVRDNAEITIVGELPPQTAKRIAENIKFGAAQ</sequence>
<organism>
    <name type="scientific">Escherichia coli (strain K12)</name>
    <dbReference type="NCBI Taxonomy" id="83333"/>
    <lineage>
        <taxon>Bacteria</taxon>
        <taxon>Pseudomonadati</taxon>
        <taxon>Pseudomonadota</taxon>
        <taxon>Gammaproteobacteria</taxon>
        <taxon>Enterobacterales</taxon>
        <taxon>Enterobacteriaceae</taxon>
        <taxon>Escherichia</taxon>
    </lineage>
</organism>
<accession>P0AFX9</accession>
<accession>P46186</accession>
<accession>Q2MAF9</accession>
<proteinExistence type="evidence at protein level"/>